<protein>
    <recommendedName>
        <fullName>Transcriptional regulator MraZ</fullName>
    </recommendedName>
</protein>
<sequence>MFQGAVALSLDAKGRLAIPARHRDALTPDGAPLVMTVHPHRCLLVYPLTAWEPIREKITSLPGMDQATLSFKRMLVGFAQEETLDAAGRVLVAQSLRQFAALDKQVWLVGQGTHFELWSDAGWQKQQEAMLALVDNPLPAGLENFVL</sequence>
<evidence type="ECO:0000255" key="1">
    <source>
        <dbReference type="HAMAP-Rule" id="MF_01008"/>
    </source>
</evidence>
<evidence type="ECO:0000255" key="2">
    <source>
        <dbReference type="PROSITE-ProRule" id="PRU01076"/>
    </source>
</evidence>
<organism>
    <name type="scientific">Azoarcus sp. (strain BH72)</name>
    <dbReference type="NCBI Taxonomy" id="418699"/>
    <lineage>
        <taxon>Bacteria</taxon>
        <taxon>Pseudomonadati</taxon>
        <taxon>Pseudomonadota</taxon>
        <taxon>Betaproteobacteria</taxon>
        <taxon>Rhodocyclales</taxon>
        <taxon>Zoogloeaceae</taxon>
        <taxon>Azoarcus</taxon>
    </lineage>
</organism>
<feature type="chain" id="PRO_1000062848" description="Transcriptional regulator MraZ">
    <location>
        <begin position="1"/>
        <end position="147"/>
    </location>
</feature>
<feature type="domain" description="SpoVT-AbrB 1" evidence="2">
    <location>
        <begin position="5"/>
        <end position="50"/>
    </location>
</feature>
<feature type="domain" description="SpoVT-AbrB 2" evidence="2">
    <location>
        <begin position="79"/>
        <end position="122"/>
    </location>
</feature>
<keyword id="KW-0963">Cytoplasm</keyword>
<keyword id="KW-0238">DNA-binding</keyword>
<keyword id="KW-1185">Reference proteome</keyword>
<keyword id="KW-0677">Repeat</keyword>
<keyword id="KW-0804">Transcription</keyword>
<keyword id="KW-0805">Transcription regulation</keyword>
<gene>
    <name evidence="1" type="primary">mraZ</name>
    <name type="ordered locus">azo0875</name>
</gene>
<comment type="subunit">
    <text evidence="1">Forms oligomers.</text>
</comment>
<comment type="subcellular location">
    <subcellularLocation>
        <location evidence="1">Cytoplasm</location>
        <location evidence="1">Nucleoid</location>
    </subcellularLocation>
</comment>
<comment type="similarity">
    <text evidence="1">Belongs to the MraZ family.</text>
</comment>
<proteinExistence type="inferred from homology"/>
<name>MRAZ_AZOSB</name>
<reference key="1">
    <citation type="journal article" date="2006" name="Nat. Biotechnol.">
        <title>Complete genome of the mutualistic, N2-fixing grass endophyte Azoarcus sp. strain BH72.</title>
        <authorList>
            <person name="Krause A."/>
            <person name="Ramakumar A."/>
            <person name="Bartels D."/>
            <person name="Battistoni F."/>
            <person name="Bekel T."/>
            <person name="Boch J."/>
            <person name="Boehm M."/>
            <person name="Friedrich F."/>
            <person name="Hurek T."/>
            <person name="Krause L."/>
            <person name="Linke B."/>
            <person name="McHardy A.C."/>
            <person name="Sarkar A."/>
            <person name="Schneiker S."/>
            <person name="Syed A.A."/>
            <person name="Thauer R."/>
            <person name="Vorhoelter F.-J."/>
            <person name="Weidner S."/>
            <person name="Puehler A."/>
            <person name="Reinhold-Hurek B."/>
            <person name="Kaiser O."/>
            <person name="Goesmann A."/>
        </authorList>
    </citation>
    <scope>NUCLEOTIDE SEQUENCE [LARGE SCALE GENOMIC DNA]</scope>
    <source>
        <strain>BH72</strain>
    </source>
</reference>
<dbReference type="EMBL" id="AM406670">
    <property type="protein sequence ID" value="CAL93492.1"/>
    <property type="molecule type" value="Genomic_DNA"/>
</dbReference>
<dbReference type="RefSeq" id="WP_011764609.1">
    <property type="nucleotide sequence ID" value="NC_008702.1"/>
</dbReference>
<dbReference type="SMR" id="A1K3T7"/>
<dbReference type="STRING" id="62928.azo0875"/>
<dbReference type="KEGG" id="aoa:dqs_0946"/>
<dbReference type="KEGG" id="azo:azo0875"/>
<dbReference type="eggNOG" id="COG2001">
    <property type="taxonomic scope" value="Bacteria"/>
</dbReference>
<dbReference type="HOGENOM" id="CLU_107907_2_0_4"/>
<dbReference type="OrthoDB" id="9807753at2"/>
<dbReference type="Proteomes" id="UP000002588">
    <property type="component" value="Chromosome"/>
</dbReference>
<dbReference type="GO" id="GO:0005737">
    <property type="term" value="C:cytoplasm"/>
    <property type="evidence" value="ECO:0007669"/>
    <property type="project" value="UniProtKB-UniRule"/>
</dbReference>
<dbReference type="GO" id="GO:0009295">
    <property type="term" value="C:nucleoid"/>
    <property type="evidence" value="ECO:0007669"/>
    <property type="project" value="UniProtKB-SubCell"/>
</dbReference>
<dbReference type="GO" id="GO:0003700">
    <property type="term" value="F:DNA-binding transcription factor activity"/>
    <property type="evidence" value="ECO:0007669"/>
    <property type="project" value="UniProtKB-UniRule"/>
</dbReference>
<dbReference type="GO" id="GO:0000976">
    <property type="term" value="F:transcription cis-regulatory region binding"/>
    <property type="evidence" value="ECO:0007669"/>
    <property type="project" value="TreeGrafter"/>
</dbReference>
<dbReference type="GO" id="GO:2000143">
    <property type="term" value="P:negative regulation of DNA-templated transcription initiation"/>
    <property type="evidence" value="ECO:0007669"/>
    <property type="project" value="TreeGrafter"/>
</dbReference>
<dbReference type="CDD" id="cd16321">
    <property type="entry name" value="MraZ_C"/>
    <property type="match status" value="1"/>
</dbReference>
<dbReference type="CDD" id="cd16320">
    <property type="entry name" value="MraZ_N"/>
    <property type="match status" value="1"/>
</dbReference>
<dbReference type="Gene3D" id="3.40.1550.20">
    <property type="entry name" value="Transcriptional regulator MraZ domain"/>
    <property type="match status" value="1"/>
</dbReference>
<dbReference type="HAMAP" id="MF_01008">
    <property type="entry name" value="MraZ"/>
    <property type="match status" value="1"/>
</dbReference>
<dbReference type="InterPro" id="IPR003444">
    <property type="entry name" value="MraZ"/>
</dbReference>
<dbReference type="InterPro" id="IPR035644">
    <property type="entry name" value="MraZ_C"/>
</dbReference>
<dbReference type="InterPro" id="IPR020603">
    <property type="entry name" value="MraZ_dom"/>
</dbReference>
<dbReference type="InterPro" id="IPR035642">
    <property type="entry name" value="MraZ_N"/>
</dbReference>
<dbReference type="InterPro" id="IPR038619">
    <property type="entry name" value="MraZ_sf"/>
</dbReference>
<dbReference type="InterPro" id="IPR007159">
    <property type="entry name" value="SpoVT-AbrB_dom"/>
</dbReference>
<dbReference type="InterPro" id="IPR037914">
    <property type="entry name" value="SpoVT-AbrB_sf"/>
</dbReference>
<dbReference type="NCBIfam" id="TIGR00242">
    <property type="entry name" value="division/cell wall cluster transcriptional repressor MraZ"/>
    <property type="match status" value="1"/>
</dbReference>
<dbReference type="PANTHER" id="PTHR34701">
    <property type="entry name" value="TRANSCRIPTIONAL REGULATOR MRAZ"/>
    <property type="match status" value="1"/>
</dbReference>
<dbReference type="PANTHER" id="PTHR34701:SF1">
    <property type="entry name" value="TRANSCRIPTIONAL REGULATOR MRAZ"/>
    <property type="match status" value="1"/>
</dbReference>
<dbReference type="Pfam" id="PF02381">
    <property type="entry name" value="MraZ"/>
    <property type="match status" value="2"/>
</dbReference>
<dbReference type="SUPFAM" id="SSF89447">
    <property type="entry name" value="AbrB/MazE/MraZ-like"/>
    <property type="match status" value="1"/>
</dbReference>
<dbReference type="PROSITE" id="PS51740">
    <property type="entry name" value="SPOVT_ABRB"/>
    <property type="match status" value="2"/>
</dbReference>
<accession>A1K3T7</accession>